<name>MCM10_MOUSE</name>
<keyword id="KW-0175">Coiled coil</keyword>
<keyword id="KW-0227">DNA damage</keyword>
<keyword id="KW-0235">DNA replication</keyword>
<keyword id="KW-0238">DNA-binding</keyword>
<keyword id="KW-1017">Isopeptide bond</keyword>
<keyword id="KW-0479">Metal-binding</keyword>
<keyword id="KW-0539">Nucleus</keyword>
<keyword id="KW-0597">Phosphoprotein</keyword>
<keyword id="KW-1185">Reference proteome</keyword>
<keyword id="KW-0832">Ubl conjugation</keyword>
<keyword id="KW-0862">Zinc</keyword>
<keyword id="KW-0863">Zinc-finger</keyword>
<comment type="function">
    <text evidence="3">Acts as a replication initiation factor that brings together the MCM2-7 helicase and the DNA polymerase alpha/primase complex in order to initiate DNA replication. Additionally, plays a role in preventing DNA damage during replication. Key effector of the RBBP6 and ZBTB38-mediated regulation of DNA-replication and common fragile sites stability; acts as a direct target of transcriptional repression by ZBTB38 (By similarity).</text>
</comment>
<comment type="subunit">
    <text evidence="2 3">Self-associates (By similarity). Interacts with ORC2. May interact with MCM2 and MCM6. Interacts with the DNA polymerase alpha subunit POLA1. Interacts with RECQL4; this interaction regulates RECQL4 unwinding activity. Interacts with WDHD1 (By similarity).</text>
</comment>
<comment type="subcellular location">
    <subcellularLocation>
        <location evidence="3">Nucleus</location>
    </subcellularLocation>
    <text evidence="3">Colocalizes with ORC2 in nuclei foci. Associated with chromatin in S phase (By similarity).</text>
</comment>
<comment type="domain">
    <text evidence="2">Each zinc finger-like domain binds a zinc ion and is involved in both ssDNA and dsDNA binding, as is the OB-fold domain.</text>
</comment>
<comment type="domain">
    <text evidence="2">The N-terminal domain mediates homodimerization.</text>
</comment>
<comment type="similarity">
    <text evidence="6">Belongs to the MCM10 family.</text>
</comment>
<reference key="1">
    <citation type="journal article" date="2005" name="Science">
        <title>The transcriptional landscape of the mammalian genome.</title>
        <authorList>
            <person name="Carninci P."/>
            <person name="Kasukawa T."/>
            <person name="Katayama S."/>
            <person name="Gough J."/>
            <person name="Frith M.C."/>
            <person name="Maeda N."/>
            <person name="Oyama R."/>
            <person name="Ravasi T."/>
            <person name="Lenhard B."/>
            <person name="Wells C."/>
            <person name="Kodzius R."/>
            <person name="Shimokawa K."/>
            <person name="Bajic V.B."/>
            <person name="Brenner S.E."/>
            <person name="Batalov S."/>
            <person name="Forrest A.R."/>
            <person name="Zavolan M."/>
            <person name="Davis M.J."/>
            <person name="Wilming L.G."/>
            <person name="Aidinis V."/>
            <person name="Allen J.E."/>
            <person name="Ambesi-Impiombato A."/>
            <person name="Apweiler R."/>
            <person name="Aturaliya R.N."/>
            <person name="Bailey T.L."/>
            <person name="Bansal M."/>
            <person name="Baxter L."/>
            <person name="Beisel K.W."/>
            <person name="Bersano T."/>
            <person name="Bono H."/>
            <person name="Chalk A.M."/>
            <person name="Chiu K.P."/>
            <person name="Choudhary V."/>
            <person name="Christoffels A."/>
            <person name="Clutterbuck D.R."/>
            <person name="Crowe M.L."/>
            <person name="Dalla E."/>
            <person name="Dalrymple B.P."/>
            <person name="de Bono B."/>
            <person name="Della Gatta G."/>
            <person name="di Bernardo D."/>
            <person name="Down T."/>
            <person name="Engstrom P."/>
            <person name="Fagiolini M."/>
            <person name="Faulkner G."/>
            <person name="Fletcher C.F."/>
            <person name="Fukushima T."/>
            <person name="Furuno M."/>
            <person name="Futaki S."/>
            <person name="Gariboldi M."/>
            <person name="Georgii-Hemming P."/>
            <person name="Gingeras T.R."/>
            <person name="Gojobori T."/>
            <person name="Green R.E."/>
            <person name="Gustincich S."/>
            <person name="Harbers M."/>
            <person name="Hayashi Y."/>
            <person name="Hensch T.K."/>
            <person name="Hirokawa N."/>
            <person name="Hill D."/>
            <person name="Huminiecki L."/>
            <person name="Iacono M."/>
            <person name="Ikeo K."/>
            <person name="Iwama A."/>
            <person name="Ishikawa T."/>
            <person name="Jakt M."/>
            <person name="Kanapin A."/>
            <person name="Katoh M."/>
            <person name="Kawasawa Y."/>
            <person name="Kelso J."/>
            <person name="Kitamura H."/>
            <person name="Kitano H."/>
            <person name="Kollias G."/>
            <person name="Krishnan S.P."/>
            <person name="Kruger A."/>
            <person name="Kummerfeld S.K."/>
            <person name="Kurochkin I.V."/>
            <person name="Lareau L.F."/>
            <person name="Lazarevic D."/>
            <person name="Lipovich L."/>
            <person name="Liu J."/>
            <person name="Liuni S."/>
            <person name="McWilliam S."/>
            <person name="Madan Babu M."/>
            <person name="Madera M."/>
            <person name="Marchionni L."/>
            <person name="Matsuda H."/>
            <person name="Matsuzawa S."/>
            <person name="Miki H."/>
            <person name="Mignone F."/>
            <person name="Miyake S."/>
            <person name="Morris K."/>
            <person name="Mottagui-Tabar S."/>
            <person name="Mulder N."/>
            <person name="Nakano N."/>
            <person name="Nakauchi H."/>
            <person name="Ng P."/>
            <person name="Nilsson R."/>
            <person name="Nishiguchi S."/>
            <person name="Nishikawa S."/>
            <person name="Nori F."/>
            <person name="Ohara O."/>
            <person name="Okazaki Y."/>
            <person name="Orlando V."/>
            <person name="Pang K.C."/>
            <person name="Pavan W.J."/>
            <person name="Pavesi G."/>
            <person name="Pesole G."/>
            <person name="Petrovsky N."/>
            <person name="Piazza S."/>
            <person name="Reed J."/>
            <person name="Reid J.F."/>
            <person name="Ring B.Z."/>
            <person name="Ringwald M."/>
            <person name="Rost B."/>
            <person name="Ruan Y."/>
            <person name="Salzberg S.L."/>
            <person name="Sandelin A."/>
            <person name="Schneider C."/>
            <person name="Schoenbach C."/>
            <person name="Sekiguchi K."/>
            <person name="Semple C.A."/>
            <person name="Seno S."/>
            <person name="Sessa L."/>
            <person name="Sheng Y."/>
            <person name="Shibata Y."/>
            <person name="Shimada H."/>
            <person name="Shimada K."/>
            <person name="Silva D."/>
            <person name="Sinclair B."/>
            <person name="Sperling S."/>
            <person name="Stupka E."/>
            <person name="Sugiura K."/>
            <person name="Sultana R."/>
            <person name="Takenaka Y."/>
            <person name="Taki K."/>
            <person name="Tammoja K."/>
            <person name="Tan S.L."/>
            <person name="Tang S."/>
            <person name="Taylor M.S."/>
            <person name="Tegner J."/>
            <person name="Teichmann S.A."/>
            <person name="Ueda H.R."/>
            <person name="van Nimwegen E."/>
            <person name="Verardo R."/>
            <person name="Wei C.L."/>
            <person name="Yagi K."/>
            <person name="Yamanishi H."/>
            <person name="Zabarovsky E."/>
            <person name="Zhu S."/>
            <person name="Zimmer A."/>
            <person name="Hide W."/>
            <person name="Bult C."/>
            <person name="Grimmond S.M."/>
            <person name="Teasdale R.D."/>
            <person name="Liu E.T."/>
            <person name="Brusic V."/>
            <person name="Quackenbush J."/>
            <person name="Wahlestedt C."/>
            <person name="Mattick J.S."/>
            <person name="Hume D.A."/>
            <person name="Kai C."/>
            <person name="Sasaki D."/>
            <person name="Tomaru Y."/>
            <person name="Fukuda S."/>
            <person name="Kanamori-Katayama M."/>
            <person name="Suzuki M."/>
            <person name="Aoki J."/>
            <person name="Arakawa T."/>
            <person name="Iida J."/>
            <person name="Imamura K."/>
            <person name="Itoh M."/>
            <person name="Kato T."/>
            <person name="Kawaji H."/>
            <person name="Kawagashira N."/>
            <person name="Kawashima T."/>
            <person name="Kojima M."/>
            <person name="Kondo S."/>
            <person name="Konno H."/>
            <person name="Nakano K."/>
            <person name="Ninomiya N."/>
            <person name="Nishio T."/>
            <person name="Okada M."/>
            <person name="Plessy C."/>
            <person name="Shibata K."/>
            <person name="Shiraki T."/>
            <person name="Suzuki S."/>
            <person name="Tagami M."/>
            <person name="Waki K."/>
            <person name="Watahiki A."/>
            <person name="Okamura-Oho Y."/>
            <person name="Suzuki H."/>
            <person name="Kawai J."/>
            <person name="Hayashizaki Y."/>
        </authorList>
    </citation>
    <scope>NUCLEOTIDE SEQUENCE [LARGE SCALE MRNA]</scope>
    <source>
        <strain>C57BL/6J</strain>
        <tissue>Thymus</tissue>
    </source>
</reference>
<reference key="2">
    <citation type="journal article" date="2009" name="PLoS Biol.">
        <title>Lineage-specific biology revealed by a finished genome assembly of the mouse.</title>
        <authorList>
            <person name="Church D.M."/>
            <person name="Goodstadt L."/>
            <person name="Hillier L.W."/>
            <person name="Zody M.C."/>
            <person name="Goldstein S."/>
            <person name="She X."/>
            <person name="Bult C.J."/>
            <person name="Agarwala R."/>
            <person name="Cherry J.L."/>
            <person name="DiCuccio M."/>
            <person name="Hlavina W."/>
            <person name="Kapustin Y."/>
            <person name="Meric P."/>
            <person name="Maglott D."/>
            <person name="Birtle Z."/>
            <person name="Marques A.C."/>
            <person name="Graves T."/>
            <person name="Zhou S."/>
            <person name="Teague B."/>
            <person name="Potamousis K."/>
            <person name="Churas C."/>
            <person name="Place M."/>
            <person name="Herschleb J."/>
            <person name="Runnheim R."/>
            <person name="Forrest D."/>
            <person name="Amos-Landgraf J."/>
            <person name="Schwartz D.C."/>
            <person name="Cheng Z."/>
            <person name="Lindblad-Toh K."/>
            <person name="Eichler E.E."/>
            <person name="Ponting C.P."/>
        </authorList>
    </citation>
    <scope>NUCLEOTIDE SEQUENCE [LARGE SCALE GENOMIC DNA]</scope>
    <source>
        <strain>C57BL/6J</strain>
    </source>
</reference>
<reference key="3">
    <citation type="journal article" date="2004" name="Genome Res.">
        <title>The status, quality, and expansion of the NIH full-length cDNA project: the Mammalian Gene Collection (MGC).</title>
        <authorList>
            <consortium name="The MGC Project Team"/>
        </authorList>
    </citation>
    <scope>NUCLEOTIDE SEQUENCE [LARGE SCALE MRNA]</scope>
    <source>
        <strain>C57BL/6J</strain>
        <tissue>Brain</tissue>
    </source>
</reference>
<reference key="4">
    <citation type="journal article" date="2010" name="Cell">
        <title>A tissue-specific atlas of mouse protein phosphorylation and expression.</title>
        <authorList>
            <person name="Huttlin E.L."/>
            <person name="Jedrychowski M.P."/>
            <person name="Elias J.E."/>
            <person name="Goswami T."/>
            <person name="Rad R."/>
            <person name="Beausoleil S.A."/>
            <person name="Villen J."/>
            <person name="Haas W."/>
            <person name="Sowa M.E."/>
            <person name="Gygi S.P."/>
        </authorList>
    </citation>
    <scope>PHOSPHORYLATION [LARGE SCALE ANALYSIS] AT THR-85 AND SER-656</scope>
    <scope>IDENTIFICATION BY MASS SPECTROMETRY [LARGE SCALE ANALYSIS]</scope>
    <source>
        <tissue>Lung</tissue>
        <tissue>Spleen</tissue>
        <tissue>Testis</tissue>
    </source>
</reference>
<proteinExistence type="evidence at protein level"/>
<feature type="chain" id="PRO_0000278321" description="Protein MCM10 homolog">
    <location>
        <begin position="1"/>
        <end position="885"/>
    </location>
</feature>
<feature type="region of interest" description="N-terminal domain" evidence="1">
    <location>
        <begin position="1"/>
        <end position="153"/>
    </location>
</feature>
<feature type="region of interest" description="Disordered" evidence="5">
    <location>
        <begin position="23"/>
        <end position="260"/>
    </location>
</feature>
<feature type="region of interest" description="OB-fold domain" evidence="1">
    <location>
        <begin position="251"/>
        <end position="405"/>
    </location>
</feature>
<feature type="region of interest" description="Zinc finger-like 1">
    <location>
        <begin position="406"/>
        <end position="431"/>
    </location>
</feature>
<feature type="region of interest" description="Disordered" evidence="5">
    <location>
        <begin position="579"/>
        <end position="642"/>
    </location>
</feature>
<feature type="region of interest" description="Zinc finger-like 2" evidence="1">
    <location>
        <begin position="793"/>
        <end position="812"/>
    </location>
</feature>
<feature type="region of interest" description="Zinc finger-like 3" evidence="1">
    <location>
        <begin position="826"/>
        <end position="846"/>
    </location>
</feature>
<feature type="coiled-coil region" evidence="4">
    <location>
        <begin position="101"/>
        <end position="139"/>
    </location>
</feature>
<feature type="compositionally biased region" description="Acidic residues" evidence="5">
    <location>
        <begin position="37"/>
        <end position="56"/>
    </location>
</feature>
<feature type="compositionally biased region" description="Basic and acidic residues" evidence="5">
    <location>
        <begin position="63"/>
        <end position="74"/>
    </location>
</feature>
<feature type="compositionally biased region" description="Acidic residues" evidence="5">
    <location>
        <begin position="80"/>
        <end position="89"/>
    </location>
</feature>
<feature type="compositionally biased region" description="Basic and acidic residues" evidence="5">
    <location>
        <begin position="107"/>
        <end position="121"/>
    </location>
</feature>
<feature type="compositionally biased region" description="Basic residues" evidence="5">
    <location>
        <begin position="181"/>
        <end position="190"/>
    </location>
</feature>
<feature type="compositionally biased region" description="Polar residues" evidence="5">
    <location>
        <begin position="193"/>
        <end position="217"/>
    </location>
</feature>
<feature type="compositionally biased region" description="Low complexity" evidence="5">
    <location>
        <begin position="218"/>
        <end position="228"/>
    </location>
</feature>
<feature type="compositionally biased region" description="Polar residues" evidence="5">
    <location>
        <begin position="236"/>
        <end position="260"/>
    </location>
</feature>
<feature type="compositionally biased region" description="Low complexity" evidence="5">
    <location>
        <begin position="603"/>
        <end position="621"/>
    </location>
</feature>
<feature type="modified residue" description="Phosphothreonine" evidence="7">
    <location>
        <position position="85"/>
    </location>
</feature>
<feature type="modified residue" description="Phosphoserine" evidence="7">
    <location>
        <position position="656"/>
    </location>
</feature>
<feature type="cross-link" description="Glycyl lysine isopeptide (Lys-Gly) (interchain with G-Cter in SUMO2)" evidence="3">
    <location>
        <position position="639"/>
    </location>
</feature>
<feature type="cross-link" description="Glycyl lysine isopeptide (Lys-Gly) (interchain with G-Cter in SUMO2)" evidence="3">
    <location>
        <position position="772"/>
    </location>
</feature>
<feature type="cross-link" description="Glycyl lysine isopeptide (Lys-Gly) (interchain with G-Cter in SUMO2)" evidence="3">
    <location>
        <position position="773"/>
    </location>
</feature>
<feature type="sequence conflict" description="In Ref. 3; AAH94576." evidence="6" ref="3">
    <original>G</original>
    <variation>R</variation>
    <location>
        <position position="50"/>
    </location>
</feature>
<feature type="sequence conflict" description="In Ref. 1; BAC27135." evidence="6" ref="1">
    <original>A</original>
    <variation>V</variation>
    <location>
        <position position="673"/>
    </location>
</feature>
<feature type="sequence conflict" description="In Ref. 3; AAH94576." evidence="6" ref="3">
    <original>R</original>
    <variation>I</variation>
    <location>
        <position position="873"/>
    </location>
</feature>
<accession>Q0VBD2</accession>
<accession>Q505F3</accession>
<accession>Q8BMJ1</accession>
<accession>Q8BYA7</accession>
<evidence type="ECO:0000250" key="1"/>
<evidence type="ECO:0000250" key="2">
    <source>
        <dbReference type="UniProtKB" id="Q5EAW4"/>
    </source>
</evidence>
<evidence type="ECO:0000250" key="3">
    <source>
        <dbReference type="UniProtKB" id="Q7L590"/>
    </source>
</evidence>
<evidence type="ECO:0000255" key="4"/>
<evidence type="ECO:0000256" key="5">
    <source>
        <dbReference type="SAM" id="MobiDB-lite"/>
    </source>
</evidence>
<evidence type="ECO:0000305" key="6"/>
<evidence type="ECO:0007744" key="7">
    <source>
    </source>
</evidence>
<sequence length="885" mass="98406">MDVEEDDLCLLTSLLEENEAVLPCSSEKDKSLSLGDGDPDEFDELFDADGDGESYTEEAGSGEEGKTGNQEERLATLFGDVEDLTDDEVATSKVGNSGPPPAPSQEKTSEELQDELKKLQEQMKSLQEQLKAASIKQPPGTAPLQEPPDSSLQPLLKEKRIRRIQESACFSAELDVPTLPKAKRVARKPKTPAESSSRMRTPAQPLQVSSSFLEPNHSSSSRSSTPSPQAVPGNKCSRTIRNQNTVSPGNSGDRPQQVSQVSVEAFSGLRLRRPRVSSTEMSRKMAGRKLIRLPQIKEKMATENLEETDWVTFGVILRKVTPQSATSGQTFSIWKLNDLHDLTQCVSLFLFGDVHKDLWKTEQGTVIGLLNANPMKPKDGLKEVCLSIDHPQKVLIMGEAMDLGACKAKKKNGEPCTQTVNLHDCEYCQYHIQAQYKKLSAKRTDLQSTFSGGRIPKKFRKGTSLKERLCQDGFYYGGVSSESFAASRAAAIAPKKKVQTTLTNLVVRGTNSIIQETKQKLGIPQKSLSCSEEFRELMALPTFGARNLQKHLARAKASGSSKPAIQSISASALLKQQKQQMLEMRKRRSEDIQKRFLQSSSEVQSPAVPSSSRQAAAQSPRTGAEFPRLEGTATPRMPKLGRGISEGDDVLFFDDSPPPRPKLSAAAEAKKLAAIAKLRAKGQILTKVDPNNTVRKQMDGRAMLGVKERVENSNTVSPEEELEPARKKRREQLAYLESEEFQKILKAKSKHTDILKEAEAELQKSYFEPLVKKEQMEEKMRATREVKCRVVTCRTCTYTHFKPLETCVSEQHNLHWHDGVKRFFKCPCGNRTISLDKLPNKHCRNCGLYKWERDGMLKEKTGPKIGGETLLPRGEEHAKFLNSLK</sequence>
<dbReference type="EMBL" id="AK030780">
    <property type="protein sequence ID" value="BAC27135.1"/>
    <property type="molecule type" value="mRNA"/>
</dbReference>
<dbReference type="EMBL" id="AK041406">
    <property type="protein sequence ID" value="BAC30933.1"/>
    <property type="molecule type" value="mRNA"/>
</dbReference>
<dbReference type="EMBL" id="AL928662">
    <property type="status" value="NOT_ANNOTATED_CDS"/>
    <property type="molecule type" value="Genomic_DNA"/>
</dbReference>
<dbReference type="EMBL" id="BC094576">
    <property type="protein sequence ID" value="AAH94576.1"/>
    <property type="molecule type" value="mRNA"/>
</dbReference>
<dbReference type="EMBL" id="BC120689">
    <property type="protein sequence ID" value="AAI20690.1"/>
    <property type="molecule type" value="mRNA"/>
</dbReference>
<dbReference type="EMBL" id="BC120687">
    <property type="protein sequence ID" value="AAI20688.1"/>
    <property type="molecule type" value="mRNA"/>
</dbReference>
<dbReference type="CCDS" id="CCDS15662.1"/>
<dbReference type="RefSeq" id="NP_001292188.1">
    <property type="nucleotide sequence ID" value="NM_001305259.1"/>
</dbReference>
<dbReference type="RefSeq" id="NP_081566.2">
    <property type="nucleotide sequence ID" value="NM_027290.3"/>
</dbReference>
<dbReference type="RefSeq" id="XP_036018451.1">
    <property type="nucleotide sequence ID" value="XM_036162558.1"/>
</dbReference>
<dbReference type="SMR" id="Q0VBD2"/>
<dbReference type="BioGRID" id="213824">
    <property type="interactions" value="2"/>
</dbReference>
<dbReference type="FunCoup" id="Q0VBD2">
    <property type="interactions" value="2874"/>
</dbReference>
<dbReference type="STRING" id="10090.ENSMUSP00000100050"/>
<dbReference type="GlyGen" id="Q0VBD2">
    <property type="glycosylation" value="1 site"/>
</dbReference>
<dbReference type="iPTMnet" id="Q0VBD2"/>
<dbReference type="PhosphoSitePlus" id="Q0VBD2"/>
<dbReference type="jPOST" id="Q0VBD2"/>
<dbReference type="PaxDb" id="10090-ENSMUSP00000027980"/>
<dbReference type="PeptideAtlas" id="Q0VBD2"/>
<dbReference type="ProteomicsDB" id="295707"/>
<dbReference type="Antibodypedia" id="11355">
    <property type="antibodies" value="151 antibodies from 25 providers"/>
</dbReference>
<dbReference type="Ensembl" id="ENSMUST00000027980.8">
    <property type="protein sequence ID" value="ENSMUSP00000027980.8"/>
    <property type="gene ID" value="ENSMUSG00000026669.15"/>
</dbReference>
<dbReference type="Ensembl" id="ENSMUST00000102985.8">
    <property type="protein sequence ID" value="ENSMUSP00000100050.2"/>
    <property type="gene ID" value="ENSMUSG00000026669.15"/>
</dbReference>
<dbReference type="GeneID" id="70024"/>
<dbReference type="KEGG" id="mmu:70024"/>
<dbReference type="UCSC" id="uc008ifh.2">
    <property type="organism name" value="mouse"/>
</dbReference>
<dbReference type="AGR" id="MGI:1917274"/>
<dbReference type="CTD" id="55388"/>
<dbReference type="MGI" id="MGI:1917274">
    <property type="gene designation" value="Mcm10"/>
</dbReference>
<dbReference type="VEuPathDB" id="HostDB:ENSMUSG00000026669"/>
<dbReference type="eggNOG" id="KOG3056">
    <property type="taxonomic scope" value="Eukaryota"/>
</dbReference>
<dbReference type="GeneTree" id="ENSGT00390000007134"/>
<dbReference type="HOGENOM" id="CLU_014680_0_0_1"/>
<dbReference type="InParanoid" id="Q0VBD2"/>
<dbReference type="OMA" id="YKMPCKA"/>
<dbReference type="OrthoDB" id="273123at2759"/>
<dbReference type="PhylomeDB" id="Q0VBD2"/>
<dbReference type="TreeFam" id="TF313330"/>
<dbReference type="Reactome" id="R-MMU-176187">
    <property type="pathway name" value="Activation of ATR in response to replication stress"/>
</dbReference>
<dbReference type="Reactome" id="R-MMU-68962">
    <property type="pathway name" value="Activation of the pre-replicative complex"/>
</dbReference>
<dbReference type="BioGRID-ORCS" id="70024">
    <property type="hits" value="12 hits in 78 CRISPR screens"/>
</dbReference>
<dbReference type="PRO" id="PR:Q0VBD2"/>
<dbReference type="Proteomes" id="UP000000589">
    <property type="component" value="Chromosome 2"/>
</dbReference>
<dbReference type="RNAct" id="Q0VBD2">
    <property type="molecule type" value="protein"/>
</dbReference>
<dbReference type="Bgee" id="ENSMUSG00000026669">
    <property type="expression patterns" value="Expressed in animal zygote and 169 other cell types or tissues"/>
</dbReference>
<dbReference type="GO" id="GO:0005730">
    <property type="term" value="C:nucleolus"/>
    <property type="evidence" value="ECO:0007669"/>
    <property type="project" value="Ensembl"/>
</dbReference>
<dbReference type="GO" id="GO:0005654">
    <property type="term" value="C:nucleoplasm"/>
    <property type="evidence" value="ECO:0007669"/>
    <property type="project" value="Ensembl"/>
</dbReference>
<dbReference type="GO" id="GO:0005634">
    <property type="term" value="C:nucleus"/>
    <property type="evidence" value="ECO:0000250"/>
    <property type="project" value="UniProtKB"/>
</dbReference>
<dbReference type="GO" id="GO:0003690">
    <property type="term" value="F:double-stranded DNA binding"/>
    <property type="evidence" value="ECO:0007669"/>
    <property type="project" value="InterPro"/>
</dbReference>
<dbReference type="GO" id="GO:0019899">
    <property type="term" value="F:enzyme binding"/>
    <property type="evidence" value="ECO:0000353"/>
    <property type="project" value="BHF-UCL"/>
</dbReference>
<dbReference type="GO" id="GO:0042802">
    <property type="term" value="F:identical protein binding"/>
    <property type="evidence" value="ECO:0007669"/>
    <property type="project" value="Ensembl"/>
</dbReference>
<dbReference type="GO" id="GO:0003697">
    <property type="term" value="F:single-stranded DNA binding"/>
    <property type="evidence" value="ECO:0007669"/>
    <property type="project" value="InterPro"/>
</dbReference>
<dbReference type="GO" id="GO:0008270">
    <property type="term" value="F:zinc ion binding"/>
    <property type="evidence" value="ECO:0007669"/>
    <property type="project" value="UniProtKB-KW"/>
</dbReference>
<dbReference type="GO" id="GO:0008283">
    <property type="term" value="P:cell population proliferation"/>
    <property type="evidence" value="ECO:0000315"/>
    <property type="project" value="MGI"/>
</dbReference>
<dbReference type="GO" id="GO:0006974">
    <property type="term" value="P:DNA damage response"/>
    <property type="evidence" value="ECO:0000250"/>
    <property type="project" value="UniProtKB"/>
</dbReference>
<dbReference type="GO" id="GO:0006270">
    <property type="term" value="P:DNA replication initiation"/>
    <property type="evidence" value="ECO:0007669"/>
    <property type="project" value="Ensembl"/>
</dbReference>
<dbReference type="FunFam" id="1.20.5.420:FF:000006">
    <property type="entry name" value="Minichromosome maintenance 10 replication initiation factor"/>
    <property type="match status" value="1"/>
</dbReference>
<dbReference type="FunFam" id="2.40.50.140:FF:000167">
    <property type="entry name" value="Minichromosome maintenance 10 replication initiation factor"/>
    <property type="match status" value="1"/>
</dbReference>
<dbReference type="Gene3D" id="1.20.5.420">
    <property type="entry name" value="Immunoglobulin FC, subunit C"/>
    <property type="match status" value="1"/>
</dbReference>
<dbReference type="Gene3D" id="2.40.50.140">
    <property type="entry name" value="Nucleic acid-binding proteins"/>
    <property type="match status" value="1"/>
</dbReference>
<dbReference type="InterPro" id="IPR040184">
    <property type="entry name" value="Mcm10"/>
</dbReference>
<dbReference type="InterPro" id="IPR055065">
    <property type="entry name" value="MCM10_OB"/>
</dbReference>
<dbReference type="InterPro" id="IPR012340">
    <property type="entry name" value="NA-bd_OB-fold"/>
</dbReference>
<dbReference type="InterPro" id="IPR015411">
    <property type="entry name" value="Rep_factor_Mcm10_C"/>
</dbReference>
<dbReference type="InterPro" id="IPR015408">
    <property type="entry name" value="Znf_Mcm10/DnaG"/>
</dbReference>
<dbReference type="InterPro" id="IPR056791">
    <property type="entry name" value="Znf_Mcm10_C"/>
</dbReference>
<dbReference type="PANTHER" id="PTHR13454">
    <property type="entry name" value="PROTEIN MCM10 HOMOLOG"/>
    <property type="match status" value="1"/>
</dbReference>
<dbReference type="PANTHER" id="PTHR13454:SF11">
    <property type="entry name" value="PROTEIN MCM10 HOMOLOG"/>
    <property type="match status" value="1"/>
</dbReference>
<dbReference type="Pfam" id="PF09332">
    <property type="entry name" value="Mcm10"/>
    <property type="match status" value="1"/>
</dbReference>
<dbReference type="Pfam" id="PF22379">
    <property type="entry name" value="MCM10_OB"/>
    <property type="match status" value="1"/>
</dbReference>
<dbReference type="Pfam" id="PF24863">
    <property type="entry name" value="zf-CCCH_Mcm10"/>
    <property type="match status" value="1"/>
</dbReference>
<dbReference type="Pfam" id="PF09329">
    <property type="entry name" value="zf-primase"/>
    <property type="match status" value="1"/>
</dbReference>
<dbReference type="SMART" id="SM01280">
    <property type="entry name" value="Mcm10"/>
    <property type="match status" value="1"/>
</dbReference>
<protein>
    <recommendedName>
        <fullName>Protein MCM10 homolog</fullName>
    </recommendedName>
</protein>
<organism>
    <name type="scientific">Mus musculus</name>
    <name type="common">Mouse</name>
    <dbReference type="NCBI Taxonomy" id="10090"/>
    <lineage>
        <taxon>Eukaryota</taxon>
        <taxon>Metazoa</taxon>
        <taxon>Chordata</taxon>
        <taxon>Craniata</taxon>
        <taxon>Vertebrata</taxon>
        <taxon>Euteleostomi</taxon>
        <taxon>Mammalia</taxon>
        <taxon>Eutheria</taxon>
        <taxon>Euarchontoglires</taxon>
        <taxon>Glires</taxon>
        <taxon>Rodentia</taxon>
        <taxon>Myomorpha</taxon>
        <taxon>Muroidea</taxon>
        <taxon>Muridae</taxon>
        <taxon>Murinae</taxon>
        <taxon>Mus</taxon>
        <taxon>Mus</taxon>
    </lineage>
</organism>
<gene>
    <name type="primary">Mcm10</name>
</gene>